<keyword id="KW-0030">Aminoacyl-tRNA synthetase</keyword>
<keyword id="KW-0067">ATP-binding</keyword>
<keyword id="KW-0175">Coiled coil</keyword>
<keyword id="KW-0963">Cytoplasm</keyword>
<keyword id="KW-0238">DNA-binding</keyword>
<keyword id="KW-0436">Ligase</keyword>
<keyword id="KW-0460">Magnesium</keyword>
<keyword id="KW-0479">Metal-binding</keyword>
<keyword id="KW-0547">Nucleotide-binding</keyword>
<keyword id="KW-0648">Protein biosynthesis</keyword>
<keyword id="KW-1185">Reference proteome</keyword>
<proteinExistence type="evidence at transcript level"/>
<protein>
    <recommendedName>
        <fullName evidence="5">Aspartate--tRNA ligase 1, cytoplasmic</fullName>
        <ecNumber evidence="5">6.1.1.12</ecNumber>
    </recommendedName>
    <alternativeName>
        <fullName evidence="5">Aspartyl-tRNA synthetase</fullName>
        <shortName evidence="5">AspRS</shortName>
    </alternativeName>
</protein>
<evidence type="ECO:0000250" key="1"/>
<evidence type="ECO:0000250" key="2">
    <source>
        <dbReference type="UniProtKB" id="P14868"/>
    </source>
</evidence>
<evidence type="ECO:0000255" key="3"/>
<evidence type="ECO:0000256" key="4">
    <source>
        <dbReference type="SAM" id="MobiDB-lite"/>
    </source>
</evidence>
<evidence type="ECO:0000305" key="5"/>
<evidence type="ECO:0000305" key="6">
    <source>
    </source>
</evidence>
<evidence type="ECO:0000305" key="7">
    <source>
    </source>
</evidence>
<evidence type="ECO:0000312" key="8">
    <source>
        <dbReference type="Araport" id="AT4G26870"/>
    </source>
</evidence>
<evidence type="ECO:0000312" key="9">
    <source>
        <dbReference type="EMBL" id="CAB36533.1"/>
    </source>
</evidence>
<sequence length="532" mass="60333">MVGSEVLEECGEKISKKESKKRAAKLEKLLRKQEREEATSSSLSLEEEDESCSSNYGDVTTNELQSAVEGKELTDVSNLVEEIVGSEVSIRGRLHKNRLVGTKLFVILRESGFTVQCVVEETRVGANMIKFVKQLSRESVVELIGVVSHPKKPLTGTTQQVEIHVRKMYCLSRSLPNLPLVVEDAARSESDIEKSGKDGKQAARVLQDTRLNNRVLDIRTPANQAIFRIQCQVQIAFREYLQSKGFLEIHTPKLIAGSSEGGSAVFRLDYKGQPACLAQSPQLHKQMAICGDMRRVFEVGPVFRAEDSFTHRHLCEFVGLDVEMEIRMHYSEIMDLVGELFPFIFTKIEERCPKELESVRKQYPFQSLKFLPQTLRLTFAEGIQMLKEAGEEVDPLGDLNTESERKLGQLVLEKYKTEFYMLHRYPSAVRPFYTMPYENDSNYSNSFDVFIRGEEIMSGAQRIHDPELLEKRARECGIDVKTISTYIDAFRYGAPPHGGFGVGLERVVMLLCALNNIRKTSLFPRDSQRLTP</sequence>
<accession>Q8H104</accession>
<accession>Q9SZ27</accession>
<gene>
    <name evidence="8" type="ordered locus">At4g26870</name>
    <name evidence="9" type="ORF">F10M23.210</name>
</gene>
<comment type="function">
    <text evidence="2">Catalyzes the specific attachment of an amino acid to its cognate tRNA in a 2 step reaction: the amino acid (AA) is first activated by ATP to form AA-AMP and then transferred to the acceptor end of the tRNA.</text>
</comment>
<comment type="catalytic activity">
    <reaction evidence="5">
        <text>tRNA(Asp) + L-aspartate + ATP = L-aspartyl-tRNA(Asp) + AMP + diphosphate</text>
        <dbReference type="Rhea" id="RHEA:19649"/>
        <dbReference type="Rhea" id="RHEA-COMP:9660"/>
        <dbReference type="Rhea" id="RHEA-COMP:9678"/>
        <dbReference type="ChEBI" id="CHEBI:29991"/>
        <dbReference type="ChEBI" id="CHEBI:30616"/>
        <dbReference type="ChEBI" id="CHEBI:33019"/>
        <dbReference type="ChEBI" id="CHEBI:78442"/>
        <dbReference type="ChEBI" id="CHEBI:78516"/>
        <dbReference type="ChEBI" id="CHEBI:456215"/>
        <dbReference type="EC" id="6.1.1.12"/>
    </reaction>
</comment>
<comment type="subcellular location">
    <subcellularLocation>
        <location evidence="6 7">Cytoplasm</location>
        <location evidence="6 7">Cytosol</location>
    </subcellularLocation>
</comment>
<comment type="similarity">
    <text evidence="5">Belongs to the class-II aminoacyl-tRNA synthetase family. Type 2 subfamily.</text>
</comment>
<comment type="sequence caution" evidence="5">
    <conflict type="erroneous gene model prediction">
        <sequence resource="EMBL-CDS" id="CAB36533"/>
    </conflict>
</comment>
<comment type="sequence caution" evidence="5">
    <conflict type="erroneous gene model prediction">
        <sequence resource="EMBL-CDS" id="CAB79542"/>
    </conflict>
</comment>
<reference key="1">
    <citation type="journal article" date="1999" name="Nature">
        <title>Sequence and analysis of chromosome 4 of the plant Arabidopsis thaliana.</title>
        <authorList>
            <person name="Mayer K.F.X."/>
            <person name="Schueller C."/>
            <person name="Wambutt R."/>
            <person name="Murphy G."/>
            <person name="Volckaert G."/>
            <person name="Pohl T."/>
            <person name="Duesterhoeft A."/>
            <person name="Stiekema W."/>
            <person name="Entian K.-D."/>
            <person name="Terryn N."/>
            <person name="Harris B."/>
            <person name="Ansorge W."/>
            <person name="Brandt P."/>
            <person name="Grivell L.A."/>
            <person name="Rieger M."/>
            <person name="Weichselgartner M."/>
            <person name="de Simone V."/>
            <person name="Obermaier B."/>
            <person name="Mache R."/>
            <person name="Mueller M."/>
            <person name="Kreis M."/>
            <person name="Delseny M."/>
            <person name="Puigdomenech P."/>
            <person name="Watson M."/>
            <person name="Schmidtheini T."/>
            <person name="Reichert B."/>
            <person name="Portetelle D."/>
            <person name="Perez-Alonso M."/>
            <person name="Boutry M."/>
            <person name="Bancroft I."/>
            <person name="Vos P."/>
            <person name="Hoheisel J."/>
            <person name="Zimmermann W."/>
            <person name="Wedler H."/>
            <person name="Ridley P."/>
            <person name="Langham S.-A."/>
            <person name="McCullagh B."/>
            <person name="Bilham L."/>
            <person name="Robben J."/>
            <person name="van der Schueren J."/>
            <person name="Grymonprez B."/>
            <person name="Chuang Y.-J."/>
            <person name="Vandenbussche F."/>
            <person name="Braeken M."/>
            <person name="Weltjens I."/>
            <person name="Voet M."/>
            <person name="Bastiaens I."/>
            <person name="Aert R."/>
            <person name="Defoor E."/>
            <person name="Weitzenegger T."/>
            <person name="Bothe G."/>
            <person name="Ramsperger U."/>
            <person name="Hilbert H."/>
            <person name="Braun M."/>
            <person name="Holzer E."/>
            <person name="Brandt A."/>
            <person name="Peters S."/>
            <person name="van Staveren M."/>
            <person name="Dirkse W."/>
            <person name="Mooijman P."/>
            <person name="Klein Lankhorst R."/>
            <person name="Rose M."/>
            <person name="Hauf J."/>
            <person name="Koetter P."/>
            <person name="Berneiser S."/>
            <person name="Hempel S."/>
            <person name="Feldpausch M."/>
            <person name="Lamberth S."/>
            <person name="Van den Daele H."/>
            <person name="De Keyser A."/>
            <person name="Buysshaert C."/>
            <person name="Gielen J."/>
            <person name="Villarroel R."/>
            <person name="De Clercq R."/>
            <person name="van Montagu M."/>
            <person name="Rogers J."/>
            <person name="Cronin A."/>
            <person name="Quail M.A."/>
            <person name="Bray-Allen S."/>
            <person name="Clark L."/>
            <person name="Doggett J."/>
            <person name="Hall S."/>
            <person name="Kay M."/>
            <person name="Lennard N."/>
            <person name="McLay K."/>
            <person name="Mayes R."/>
            <person name="Pettett A."/>
            <person name="Rajandream M.A."/>
            <person name="Lyne M."/>
            <person name="Benes V."/>
            <person name="Rechmann S."/>
            <person name="Borkova D."/>
            <person name="Bloecker H."/>
            <person name="Scharfe M."/>
            <person name="Grimm M."/>
            <person name="Loehnert T.-H."/>
            <person name="Dose S."/>
            <person name="de Haan M."/>
            <person name="Maarse A.C."/>
            <person name="Schaefer M."/>
            <person name="Mueller-Auer S."/>
            <person name="Gabel C."/>
            <person name="Fuchs M."/>
            <person name="Fartmann B."/>
            <person name="Granderath K."/>
            <person name="Dauner D."/>
            <person name="Herzl A."/>
            <person name="Neumann S."/>
            <person name="Argiriou A."/>
            <person name="Vitale D."/>
            <person name="Liguori R."/>
            <person name="Piravandi E."/>
            <person name="Massenet O."/>
            <person name="Quigley F."/>
            <person name="Clabauld G."/>
            <person name="Muendlein A."/>
            <person name="Felber R."/>
            <person name="Schnabl S."/>
            <person name="Hiller R."/>
            <person name="Schmidt W."/>
            <person name="Lecharny A."/>
            <person name="Aubourg S."/>
            <person name="Chefdor F."/>
            <person name="Cooke R."/>
            <person name="Berger C."/>
            <person name="Monfort A."/>
            <person name="Casacuberta E."/>
            <person name="Gibbons T."/>
            <person name="Weber N."/>
            <person name="Vandenbol M."/>
            <person name="Bargues M."/>
            <person name="Terol J."/>
            <person name="Torres A."/>
            <person name="Perez-Perez A."/>
            <person name="Purnelle B."/>
            <person name="Bent E."/>
            <person name="Johnson S."/>
            <person name="Tacon D."/>
            <person name="Jesse T."/>
            <person name="Heijnen L."/>
            <person name="Schwarz S."/>
            <person name="Scholler P."/>
            <person name="Heber S."/>
            <person name="Francs P."/>
            <person name="Bielke C."/>
            <person name="Frishman D."/>
            <person name="Haase D."/>
            <person name="Lemcke K."/>
            <person name="Mewes H.-W."/>
            <person name="Stocker S."/>
            <person name="Zaccaria P."/>
            <person name="Bevan M."/>
            <person name="Wilson R.K."/>
            <person name="de la Bastide M."/>
            <person name="Habermann K."/>
            <person name="Parnell L."/>
            <person name="Dedhia N."/>
            <person name="Gnoj L."/>
            <person name="Schutz K."/>
            <person name="Huang E."/>
            <person name="Spiegel L."/>
            <person name="Sekhon M."/>
            <person name="Murray J."/>
            <person name="Sheet P."/>
            <person name="Cordes M."/>
            <person name="Abu-Threideh J."/>
            <person name="Stoneking T."/>
            <person name="Kalicki J."/>
            <person name="Graves T."/>
            <person name="Harmon G."/>
            <person name="Edwards J."/>
            <person name="Latreille P."/>
            <person name="Courtney L."/>
            <person name="Cloud J."/>
            <person name="Abbott A."/>
            <person name="Scott K."/>
            <person name="Johnson D."/>
            <person name="Minx P."/>
            <person name="Bentley D."/>
            <person name="Fulton B."/>
            <person name="Miller N."/>
            <person name="Greco T."/>
            <person name="Kemp K."/>
            <person name="Kramer J."/>
            <person name="Fulton L."/>
            <person name="Mardis E."/>
            <person name="Dante M."/>
            <person name="Pepin K."/>
            <person name="Hillier L.W."/>
            <person name="Nelson J."/>
            <person name="Spieth J."/>
            <person name="Ryan E."/>
            <person name="Andrews S."/>
            <person name="Geisel C."/>
            <person name="Layman D."/>
            <person name="Du H."/>
            <person name="Ali J."/>
            <person name="Berghoff A."/>
            <person name="Jones K."/>
            <person name="Drone K."/>
            <person name="Cotton M."/>
            <person name="Joshu C."/>
            <person name="Antonoiu B."/>
            <person name="Zidanic M."/>
            <person name="Strong C."/>
            <person name="Sun H."/>
            <person name="Lamar B."/>
            <person name="Yordan C."/>
            <person name="Ma P."/>
            <person name="Zhong J."/>
            <person name="Preston R."/>
            <person name="Vil D."/>
            <person name="Shekher M."/>
            <person name="Matero A."/>
            <person name="Shah R."/>
            <person name="Swaby I.K."/>
            <person name="O'Shaughnessy A."/>
            <person name="Rodriguez M."/>
            <person name="Hoffman J."/>
            <person name="Till S."/>
            <person name="Granat S."/>
            <person name="Shohdy N."/>
            <person name="Hasegawa A."/>
            <person name="Hameed A."/>
            <person name="Lodhi M."/>
            <person name="Johnson A."/>
            <person name="Chen E."/>
            <person name="Marra M.A."/>
            <person name="Martienssen R."/>
            <person name="McCombie W.R."/>
        </authorList>
    </citation>
    <scope>NUCLEOTIDE SEQUENCE [LARGE SCALE GENOMIC DNA]</scope>
    <source>
        <strain>cv. Columbia</strain>
    </source>
</reference>
<reference key="2">
    <citation type="journal article" date="2017" name="Plant J.">
        <title>Araport11: a complete reannotation of the Arabidopsis thaliana reference genome.</title>
        <authorList>
            <person name="Cheng C.Y."/>
            <person name="Krishnakumar V."/>
            <person name="Chan A.P."/>
            <person name="Thibaud-Nissen F."/>
            <person name="Schobel S."/>
            <person name="Town C.D."/>
        </authorList>
    </citation>
    <scope>GENOME REANNOTATION</scope>
    <source>
        <strain>cv. Columbia</strain>
    </source>
</reference>
<reference key="3">
    <citation type="journal article" date="2003" name="Science">
        <title>Empirical analysis of transcriptional activity in the Arabidopsis genome.</title>
        <authorList>
            <person name="Yamada K."/>
            <person name="Lim J."/>
            <person name="Dale J.M."/>
            <person name="Chen H."/>
            <person name="Shinn P."/>
            <person name="Palm C.J."/>
            <person name="Southwick A.M."/>
            <person name="Wu H.C."/>
            <person name="Kim C.J."/>
            <person name="Nguyen M."/>
            <person name="Pham P.K."/>
            <person name="Cheuk R.F."/>
            <person name="Karlin-Newmann G."/>
            <person name="Liu S.X."/>
            <person name="Lam B."/>
            <person name="Sakano H."/>
            <person name="Wu T."/>
            <person name="Yu G."/>
            <person name="Miranda M."/>
            <person name="Quach H.L."/>
            <person name="Tripp M."/>
            <person name="Chang C.H."/>
            <person name="Lee J.M."/>
            <person name="Toriumi M.J."/>
            <person name="Chan M.M."/>
            <person name="Tang C.C."/>
            <person name="Onodera C.S."/>
            <person name="Deng J.M."/>
            <person name="Akiyama K."/>
            <person name="Ansari Y."/>
            <person name="Arakawa T."/>
            <person name="Banh J."/>
            <person name="Banno F."/>
            <person name="Bowser L."/>
            <person name="Brooks S.Y."/>
            <person name="Carninci P."/>
            <person name="Chao Q."/>
            <person name="Choy N."/>
            <person name="Enju A."/>
            <person name="Goldsmith A.D."/>
            <person name="Gurjal M."/>
            <person name="Hansen N.F."/>
            <person name="Hayashizaki Y."/>
            <person name="Johnson-Hopson C."/>
            <person name="Hsuan V.W."/>
            <person name="Iida K."/>
            <person name="Karnes M."/>
            <person name="Khan S."/>
            <person name="Koesema E."/>
            <person name="Ishida J."/>
            <person name="Jiang P.X."/>
            <person name="Jones T."/>
            <person name="Kawai J."/>
            <person name="Kamiya A."/>
            <person name="Meyers C."/>
            <person name="Nakajima M."/>
            <person name="Narusaka M."/>
            <person name="Seki M."/>
            <person name="Sakurai T."/>
            <person name="Satou M."/>
            <person name="Tamse R."/>
            <person name="Vaysberg M."/>
            <person name="Wallender E.K."/>
            <person name="Wong C."/>
            <person name="Yamamura Y."/>
            <person name="Yuan S."/>
            <person name="Shinozaki K."/>
            <person name="Davis R.W."/>
            <person name="Theologis A."/>
            <person name="Ecker J.R."/>
        </authorList>
    </citation>
    <scope>NUCLEOTIDE SEQUENCE [LARGE SCALE MRNA]</scope>
    <source>
        <strain>cv. Columbia</strain>
    </source>
</reference>
<reference key="4">
    <citation type="journal article" date="2005" name="Plant J.">
        <title>Requirement of aminoacyl-tRNA synthetases for gametogenesis and embryo development in Arabidopsis.</title>
        <authorList>
            <person name="Berg M."/>
            <person name="Rogers R."/>
            <person name="Muralla R."/>
            <person name="Meinke D."/>
        </authorList>
    </citation>
    <scope>SUBCELLULAR LOCATION</scope>
</reference>
<reference key="5">
    <citation type="journal article" date="2005" name="Proc. Natl. Acad. Sci. U.S.A.">
        <title>Dual targeting is the rule for organellar aminoacyl-tRNA synthetases in Arabidopsis thaliana.</title>
        <authorList>
            <person name="Duchene A.-M."/>
            <person name="Giritch A."/>
            <person name="Hoffmann B."/>
            <person name="Cognat V."/>
            <person name="Lancelin D."/>
            <person name="Peeters N.M."/>
            <person name="Zaepfel M."/>
            <person name="Marechal-Drouard L."/>
            <person name="Small I.D."/>
        </authorList>
    </citation>
    <scope>SUBCELLULAR LOCATION</scope>
</reference>
<name>SYDC1_ARATH</name>
<organism>
    <name type="scientific">Arabidopsis thaliana</name>
    <name type="common">Mouse-ear cress</name>
    <dbReference type="NCBI Taxonomy" id="3702"/>
    <lineage>
        <taxon>Eukaryota</taxon>
        <taxon>Viridiplantae</taxon>
        <taxon>Streptophyta</taxon>
        <taxon>Embryophyta</taxon>
        <taxon>Tracheophyta</taxon>
        <taxon>Spermatophyta</taxon>
        <taxon>Magnoliopsida</taxon>
        <taxon>eudicotyledons</taxon>
        <taxon>Gunneridae</taxon>
        <taxon>Pentapetalae</taxon>
        <taxon>rosids</taxon>
        <taxon>malvids</taxon>
        <taxon>Brassicales</taxon>
        <taxon>Brassicaceae</taxon>
        <taxon>Camelineae</taxon>
        <taxon>Arabidopsis</taxon>
    </lineage>
</organism>
<feature type="chain" id="PRO_0000433559" description="Aspartate--tRNA ligase 1, cytoplasmic">
    <location>
        <begin position="1"/>
        <end position="532"/>
    </location>
</feature>
<feature type="DNA-binding region" description="OB" evidence="3">
    <location>
        <begin position="88"/>
        <end position="169"/>
    </location>
</feature>
<feature type="region of interest" description="Disordered" evidence="4">
    <location>
        <begin position="31"/>
        <end position="58"/>
    </location>
</feature>
<feature type="region of interest" description="Aspartate" evidence="1">
    <location>
        <begin position="282"/>
        <end position="285"/>
    </location>
</feature>
<feature type="coiled-coil region" evidence="3">
    <location>
        <begin position="7"/>
        <end position="41"/>
    </location>
</feature>
<feature type="binding site" evidence="1">
    <location>
        <position position="260"/>
    </location>
    <ligand>
        <name>L-aspartate</name>
        <dbReference type="ChEBI" id="CHEBI:29991"/>
    </ligand>
</feature>
<feature type="binding site" evidence="1">
    <location>
        <begin position="304"/>
        <end position="306"/>
    </location>
    <ligand>
        <name>ATP</name>
        <dbReference type="ChEBI" id="CHEBI:30616"/>
    </ligand>
</feature>
<feature type="binding site" evidence="1">
    <location>
        <position position="304"/>
    </location>
    <ligand>
        <name>L-aspartate</name>
        <dbReference type="ChEBI" id="CHEBI:29991"/>
    </ligand>
</feature>
<feature type="binding site" evidence="1">
    <location>
        <begin position="312"/>
        <end position="314"/>
    </location>
    <ligand>
        <name>ATP</name>
        <dbReference type="ChEBI" id="CHEBI:30616"/>
    </ligand>
</feature>
<feature type="binding site" evidence="1">
    <location>
        <position position="455"/>
    </location>
    <ligand>
        <name>ATP</name>
        <dbReference type="ChEBI" id="CHEBI:30616"/>
    </ligand>
</feature>
<feature type="binding site" evidence="1">
    <location>
        <position position="455"/>
    </location>
    <ligand>
        <name>Mg(2+)</name>
        <dbReference type="ChEBI" id="CHEBI:18420"/>
        <label>2</label>
    </ligand>
</feature>
<feature type="binding site" evidence="1">
    <location>
        <position position="455"/>
    </location>
    <ligand>
        <name>Mg(2+)</name>
        <dbReference type="ChEBI" id="CHEBI:18420"/>
        <label>3</label>
    </ligand>
</feature>
<feature type="binding site" evidence="1">
    <location>
        <position position="458"/>
    </location>
    <ligand>
        <name>L-aspartate</name>
        <dbReference type="ChEBI" id="CHEBI:29991"/>
    </ligand>
</feature>
<feature type="binding site" evidence="1">
    <location>
        <position position="458"/>
    </location>
    <ligand>
        <name>Mg(2+)</name>
        <dbReference type="ChEBI" id="CHEBI:18420"/>
        <label>2</label>
    </ligand>
</feature>
<feature type="binding site" evidence="1">
    <location>
        <position position="462"/>
    </location>
    <ligand>
        <name>L-aspartate</name>
        <dbReference type="ChEBI" id="CHEBI:29991"/>
    </ligand>
</feature>
<feature type="binding site" evidence="1">
    <location>
        <begin position="503"/>
        <end position="506"/>
    </location>
    <ligand>
        <name>ATP</name>
        <dbReference type="ChEBI" id="CHEBI:30616"/>
    </ligand>
</feature>
<dbReference type="EC" id="6.1.1.12" evidence="5"/>
<dbReference type="EMBL" id="AL035440">
    <property type="protein sequence ID" value="CAB36533.1"/>
    <property type="status" value="ALT_SEQ"/>
    <property type="molecule type" value="Genomic_DNA"/>
</dbReference>
<dbReference type="EMBL" id="AL161566">
    <property type="protein sequence ID" value="CAB79542.1"/>
    <property type="status" value="ALT_SEQ"/>
    <property type="molecule type" value="Genomic_DNA"/>
</dbReference>
<dbReference type="EMBL" id="CP002687">
    <property type="protein sequence ID" value="AEE85263.1"/>
    <property type="molecule type" value="Genomic_DNA"/>
</dbReference>
<dbReference type="EMBL" id="BT000939">
    <property type="protein sequence ID" value="AAN41339.1"/>
    <property type="molecule type" value="mRNA"/>
</dbReference>
<dbReference type="PIR" id="T04810">
    <property type="entry name" value="T04810"/>
</dbReference>
<dbReference type="RefSeq" id="NP_194417.2">
    <property type="nucleotide sequence ID" value="NM_118821.6"/>
</dbReference>
<dbReference type="SMR" id="Q8H104"/>
<dbReference type="FunCoup" id="Q8H104">
    <property type="interactions" value="4855"/>
</dbReference>
<dbReference type="IntAct" id="Q8H104">
    <property type="interactions" value="4"/>
</dbReference>
<dbReference type="STRING" id="3702.Q8H104"/>
<dbReference type="iPTMnet" id="Q8H104"/>
<dbReference type="PaxDb" id="3702-AT4G26870.1"/>
<dbReference type="ProteomicsDB" id="228314"/>
<dbReference type="EnsemblPlants" id="AT4G26870.1">
    <property type="protein sequence ID" value="AT4G26870.1"/>
    <property type="gene ID" value="AT4G26870"/>
</dbReference>
<dbReference type="GeneID" id="828794"/>
<dbReference type="Gramene" id="AT4G26870.1">
    <property type="protein sequence ID" value="AT4G26870.1"/>
    <property type="gene ID" value="AT4G26870"/>
</dbReference>
<dbReference type="KEGG" id="ath:AT4G26870"/>
<dbReference type="Araport" id="AT4G26870"/>
<dbReference type="TAIR" id="AT4G26870"/>
<dbReference type="eggNOG" id="KOG0556">
    <property type="taxonomic scope" value="Eukaryota"/>
</dbReference>
<dbReference type="HOGENOM" id="CLU_004553_2_1_1"/>
<dbReference type="InParanoid" id="Q8H104"/>
<dbReference type="OMA" id="GANMIKF"/>
<dbReference type="PhylomeDB" id="Q8H104"/>
<dbReference type="CD-CODE" id="4299E36E">
    <property type="entry name" value="Nucleolus"/>
</dbReference>
<dbReference type="PRO" id="PR:Q8H104"/>
<dbReference type="Proteomes" id="UP000006548">
    <property type="component" value="Chromosome 4"/>
</dbReference>
<dbReference type="ExpressionAtlas" id="Q8H104">
    <property type="expression patterns" value="baseline and differential"/>
</dbReference>
<dbReference type="GO" id="GO:0005829">
    <property type="term" value="C:cytosol"/>
    <property type="evidence" value="ECO:0007005"/>
    <property type="project" value="TAIR"/>
</dbReference>
<dbReference type="GO" id="GO:0009506">
    <property type="term" value="C:plasmodesma"/>
    <property type="evidence" value="ECO:0007005"/>
    <property type="project" value="TAIR"/>
</dbReference>
<dbReference type="GO" id="GO:0004815">
    <property type="term" value="F:aspartate-tRNA ligase activity"/>
    <property type="evidence" value="ECO:0007669"/>
    <property type="project" value="UniProtKB-EC"/>
</dbReference>
<dbReference type="GO" id="GO:0005524">
    <property type="term" value="F:ATP binding"/>
    <property type="evidence" value="ECO:0007669"/>
    <property type="project" value="UniProtKB-KW"/>
</dbReference>
<dbReference type="GO" id="GO:0003677">
    <property type="term" value="F:DNA binding"/>
    <property type="evidence" value="ECO:0007669"/>
    <property type="project" value="UniProtKB-KW"/>
</dbReference>
<dbReference type="GO" id="GO:0046872">
    <property type="term" value="F:metal ion binding"/>
    <property type="evidence" value="ECO:0007669"/>
    <property type="project" value="UniProtKB-KW"/>
</dbReference>
<dbReference type="GO" id="GO:0006422">
    <property type="term" value="P:aspartyl-tRNA aminoacylation"/>
    <property type="evidence" value="ECO:0007669"/>
    <property type="project" value="InterPro"/>
</dbReference>
<dbReference type="CDD" id="cd04320">
    <property type="entry name" value="AspRS_cyto_N"/>
    <property type="match status" value="1"/>
</dbReference>
<dbReference type="CDD" id="cd00776">
    <property type="entry name" value="AsxRS_core"/>
    <property type="match status" value="1"/>
</dbReference>
<dbReference type="FunFam" id="3.30.930.10:FF:000013">
    <property type="entry name" value="Aspartate--tRNA ligase, cytoplasmic"/>
    <property type="match status" value="1"/>
</dbReference>
<dbReference type="Gene3D" id="3.30.930.10">
    <property type="entry name" value="Bira Bifunctional Protein, Domain 2"/>
    <property type="match status" value="1"/>
</dbReference>
<dbReference type="Gene3D" id="2.40.50.140">
    <property type="entry name" value="Nucleic acid-binding proteins"/>
    <property type="match status" value="1"/>
</dbReference>
<dbReference type="HAMAP" id="MF_02075">
    <property type="entry name" value="Asp_tRNA_synth_type2"/>
    <property type="match status" value="1"/>
</dbReference>
<dbReference type="InterPro" id="IPR004364">
    <property type="entry name" value="Aa-tRNA-synt_II"/>
</dbReference>
<dbReference type="InterPro" id="IPR006195">
    <property type="entry name" value="aa-tRNA-synth_II"/>
</dbReference>
<dbReference type="InterPro" id="IPR045864">
    <property type="entry name" value="aa-tRNA-synth_II/BPL/LPL"/>
</dbReference>
<dbReference type="InterPro" id="IPR004523">
    <property type="entry name" value="Asp-tRNA_synthase_2"/>
</dbReference>
<dbReference type="InterPro" id="IPR002312">
    <property type="entry name" value="Asp/Asn-tRNA-synth_IIb"/>
</dbReference>
<dbReference type="InterPro" id="IPR012340">
    <property type="entry name" value="NA-bd_OB-fold"/>
</dbReference>
<dbReference type="InterPro" id="IPR004365">
    <property type="entry name" value="NA-bd_OB_tRNA"/>
</dbReference>
<dbReference type="NCBIfam" id="TIGR00458">
    <property type="entry name" value="aspS_nondisc"/>
    <property type="match status" value="1"/>
</dbReference>
<dbReference type="NCBIfam" id="NF003483">
    <property type="entry name" value="PRK05159.1"/>
    <property type="match status" value="1"/>
</dbReference>
<dbReference type="PANTHER" id="PTHR43450:SF8">
    <property type="entry name" value="ASPARTATE--TRNA LIGASE 1, CYTOPLASMIC"/>
    <property type="match status" value="1"/>
</dbReference>
<dbReference type="PANTHER" id="PTHR43450">
    <property type="entry name" value="ASPARTYL-TRNA SYNTHETASE"/>
    <property type="match status" value="1"/>
</dbReference>
<dbReference type="Pfam" id="PF00152">
    <property type="entry name" value="tRNA-synt_2"/>
    <property type="match status" value="1"/>
</dbReference>
<dbReference type="Pfam" id="PF01336">
    <property type="entry name" value="tRNA_anti-codon"/>
    <property type="match status" value="1"/>
</dbReference>
<dbReference type="PRINTS" id="PR01042">
    <property type="entry name" value="TRNASYNTHASP"/>
</dbReference>
<dbReference type="SUPFAM" id="SSF55681">
    <property type="entry name" value="Class II aaRS and biotin synthetases"/>
    <property type="match status" value="1"/>
</dbReference>
<dbReference type="SUPFAM" id="SSF50249">
    <property type="entry name" value="Nucleic acid-binding proteins"/>
    <property type="match status" value="1"/>
</dbReference>
<dbReference type="PROSITE" id="PS50862">
    <property type="entry name" value="AA_TRNA_LIGASE_II"/>
    <property type="match status" value="1"/>
</dbReference>